<dbReference type="EC" id="3.1.-.-" evidence="1"/>
<dbReference type="EMBL" id="AE017126">
    <property type="protein sequence ID" value="AAP99253.1"/>
    <property type="molecule type" value="Genomic_DNA"/>
</dbReference>
<dbReference type="RefSeq" id="NP_874601.1">
    <property type="nucleotide sequence ID" value="NC_005042.1"/>
</dbReference>
<dbReference type="RefSeq" id="WP_011124362.1">
    <property type="nucleotide sequence ID" value="NC_005042.1"/>
</dbReference>
<dbReference type="SMR" id="Q7VE08"/>
<dbReference type="STRING" id="167539.Pro_0207"/>
<dbReference type="EnsemblBacteria" id="AAP99253">
    <property type="protein sequence ID" value="AAP99253"/>
    <property type="gene ID" value="Pro_0207"/>
</dbReference>
<dbReference type="KEGG" id="pma:Pro_0207"/>
<dbReference type="PATRIC" id="fig|167539.5.peg.214"/>
<dbReference type="eggNOG" id="COG0319">
    <property type="taxonomic scope" value="Bacteria"/>
</dbReference>
<dbReference type="HOGENOM" id="CLU_106710_3_0_3"/>
<dbReference type="OrthoDB" id="9807740at2"/>
<dbReference type="Proteomes" id="UP000001420">
    <property type="component" value="Chromosome"/>
</dbReference>
<dbReference type="GO" id="GO:0005737">
    <property type="term" value="C:cytoplasm"/>
    <property type="evidence" value="ECO:0007669"/>
    <property type="project" value="UniProtKB-SubCell"/>
</dbReference>
<dbReference type="GO" id="GO:0004222">
    <property type="term" value="F:metalloendopeptidase activity"/>
    <property type="evidence" value="ECO:0007669"/>
    <property type="project" value="InterPro"/>
</dbReference>
<dbReference type="GO" id="GO:0004521">
    <property type="term" value="F:RNA endonuclease activity"/>
    <property type="evidence" value="ECO:0007669"/>
    <property type="project" value="UniProtKB-UniRule"/>
</dbReference>
<dbReference type="GO" id="GO:0008270">
    <property type="term" value="F:zinc ion binding"/>
    <property type="evidence" value="ECO:0007669"/>
    <property type="project" value="UniProtKB-UniRule"/>
</dbReference>
<dbReference type="GO" id="GO:0006364">
    <property type="term" value="P:rRNA processing"/>
    <property type="evidence" value="ECO:0007669"/>
    <property type="project" value="UniProtKB-UniRule"/>
</dbReference>
<dbReference type="Gene3D" id="3.40.390.30">
    <property type="entry name" value="Metalloproteases ('zincins'), catalytic domain"/>
    <property type="match status" value="1"/>
</dbReference>
<dbReference type="HAMAP" id="MF_00009">
    <property type="entry name" value="Endoribonucl_YbeY"/>
    <property type="match status" value="1"/>
</dbReference>
<dbReference type="InterPro" id="IPR023091">
    <property type="entry name" value="MetalPrtase_cat_dom_sf_prd"/>
</dbReference>
<dbReference type="InterPro" id="IPR002036">
    <property type="entry name" value="YbeY"/>
</dbReference>
<dbReference type="InterPro" id="IPR020549">
    <property type="entry name" value="YbeY_CS"/>
</dbReference>
<dbReference type="NCBIfam" id="TIGR00043">
    <property type="entry name" value="rRNA maturation RNase YbeY"/>
    <property type="match status" value="1"/>
</dbReference>
<dbReference type="PANTHER" id="PTHR46986">
    <property type="entry name" value="ENDORIBONUCLEASE YBEY, CHLOROPLASTIC"/>
    <property type="match status" value="1"/>
</dbReference>
<dbReference type="PANTHER" id="PTHR46986:SF1">
    <property type="entry name" value="ENDORIBONUCLEASE YBEY, CHLOROPLASTIC"/>
    <property type="match status" value="1"/>
</dbReference>
<dbReference type="Pfam" id="PF02130">
    <property type="entry name" value="YbeY"/>
    <property type="match status" value="1"/>
</dbReference>
<dbReference type="SUPFAM" id="SSF55486">
    <property type="entry name" value="Metalloproteases ('zincins'), catalytic domain"/>
    <property type="match status" value="1"/>
</dbReference>
<dbReference type="PROSITE" id="PS01306">
    <property type="entry name" value="UPF0054"/>
    <property type="match status" value="1"/>
</dbReference>
<protein>
    <recommendedName>
        <fullName evidence="1">Endoribonuclease YbeY</fullName>
        <ecNumber evidence="1">3.1.-.-</ecNumber>
    </recommendedName>
</protein>
<comment type="function">
    <text evidence="1">Single strand-specific metallo-endoribonuclease involved in late-stage 70S ribosome quality control and in maturation of the 3' terminus of the 16S rRNA.</text>
</comment>
<comment type="cofactor">
    <cofactor evidence="1">
        <name>Zn(2+)</name>
        <dbReference type="ChEBI" id="CHEBI:29105"/>
    </cofactor>
    <text evidence="1">Binds 1 zinc ion.</text>
</comment>
<comment type="subcellular location">
    <subcellularLocation>
        <location evidence="1">Cytoplasm</location>
    </subcellularLocation>
</comment>
<comment type="similarity">
    <text evidence="1">Belongs to the endoribonuclease YbeY family.</text>
</comment>
<proteinExistence type="inferred from homology"/>
<organism>
    <name type="scientific">Prochlorococcus marinus (strain SARG / CCMP1375 / SS120)</name>
    <dbReference type="NCBI Taxonomy" id="167539"/>
    <lineage>
        <taxon>Bacteria</taxon>
        <taxon>Bacillati</taxon>
        <taxon>Cyanobacteriota</taxon>
        <taxon>Cyanophyceae</taxon>
        <taxon>Synechococcales</taxon>
        <taxon>Prochlorococcaceae</taxon>
        <taxon>Prochlorococcus</taxon>
    </lineage>
</organism>
<evidence type="ECO:0000255" key="1">
    <source>
        <dbReference type="HAMAP-Rule" id="MF_00009"/>
    </source>
</evidence>
<sequence length="195" mass="22532">MQNLNDSSISVDLTIDLSLSGFTFDLMKDSIDSKMIDLIMDCDTWRNSIVSWFDCILMQPNLTCPQIVRKNRFFSMGLLFTNDLSIRQMNKEWRKKDESTDVLSFPAIDEHIVLPPNQFLELGDIIVSVETAFKQAKIHNHSLMHELRWLVSHGFLHLLGWDHPSSASLNEMLSFQELLLKTPNGSPLRNSMRDY</sequence>
<gene>
    <name evidence="1" type="primary">ybeY</name>
    <name type="ordered locus">Pro_0207</name>
</gene>
<reference key="1">
    <citation type="journal article" date="2003" name="Proc. Natl. Acad. Sci. U.S.A.">
        <title>Genome sequence of the cyanobacterium Prochlorococcus marinus SS120, a nearly minimal oxyphototrophic genome.</title>
        <authorList>
            <person name="Dufresne A."/>
            <person name="Salanoubat M."/>
            <person name="Partensky F."/>
            <person name="Artiguenave F."/>
            <person name="Axmann I.M."/>
            <person name="Barbe V."/>
            <person name="Duprat S."/>
            <person name="Galperin M.Y."/>
            <person name="Koonin E.V."/>
            <person name="Le Gall F."/>
            <person name="Makarova K.S."/>
            <person name="Ostrowski M."/>
            <person name="Oztas S."/>
            <person name="Robert C."/>
            <person name="Rogozin I.B."/>
            <person name="Scanlan D.J."/>
            <person name="Tandeau de Marsac N."/>
            <person name="Weissenbach J."/>
            <person name="Wincker P."/>
            <person name="Wolf Y.I."/>
            <person name="Hess W.R."/>
        </authorList>
    </citation>
    <scope>NUCLEOTIDE SEQUENCE [LARGE SCALE GENOMIC DNA]</scope>
    <source>
        <strain>SARG / CCMP1375 / SS120</strain>
    </source>
</reference>
<accession>Q7VE08</accession>
<feature type="chain" id="PRO_0000102507" description="Endoribonuclease YbeY">
    <location>
        <begin position="1"/>
        <end position="195"/>
    </location>
</feature>
<feature type="binding site" evidence="1">
    <location>
        <position position="153"/>
    </location>
    <ligand>
        <name>Zn(2+)</name>
        <dbReference type="ChEBI" id="CHEBI:29105"/>
        <note>catalytic</note>
    </ligand>
</feature>
<feature type="binding site" evidence="1">
    <location>
        <position position="157"/>
    </location>
    <ligand>
        <name>Zn(2+)</name>
        <dbReference type="ChEBI" id="CHEBI:29105"/>
        <note>catalytic</note>
    </ligand>
</feature>
<feature type="binding site" evidence="1">
    <location>
        <position position="163"/>
    </location>
    <ligand>
        <name>Zn(2+)</name>
        <dbReference type="ChEBI" id="CHEBI:29105"/>
        <note>catalytic</note>
    </ligand>
</feature>
<keyword id="KW-0963">Cytoplasm</keyword>
<keyword id="KW-0255">Endonuclease</keyword>
<keyword id="KW-0378">Hydrolase</keyword>
<keyword id="KW-0479">Metal-binding</keyword>
<keyword id="KW-0540">Nuclease</keyword>
<keyword id="KW-1185">Reference proteome</keyword>
<keyword id="KW-0690">Ribosome biogenesis</keyword>
<keyword id="KW-0698">rRNA processing</keyword>
<keyword id="KW-0862">Zinc</keyword>
<name>YBEY_PROMA</name>